<reference evidence="17" key="1">
    <citation type="journal article" date="1992" name="Mol. Biochem. Parasitol.">
        <title>Isolation and characterization of a cysteine proteinase gene of Plasmodium falciparum.</title>
        <authorList>
            <person name="Rosenthal P.J."/>
            <person name="Nelson R.G."/>
        </authorList>
    </citation>
    <scope>NUCLEOTIDE SEQUENCE [GENOMIC DNA]</scope>
    <scope>DEVELOPMENTAL STAGE</scope>
</reference>
<reference evidence="19" key="2">
    <citation type="journal article" date="2002" name="Nature">
        <title>Genome sequence of the human malaria parasite Plasmodium falciparum.</title>
        <authorList>
            <person name="Gardner M.J."/>
            <person name="Hall N."/>
            <person name="Fung E."/>
            <person name="White O."/>
            <person name="Berriman M."/>
            <person name="Hyman R.W."/>
            <person name="Carlton J.M."/>
            <person name="Pain A."/>
            <person name="Nelson K.E."/>
            <person name="Bowman S."/>
            <person name="Paulsen I.T."/>
            <person name="James K.D."/>
            <person name="Eisen J.A."/>
            <person name="Rutherford K.M."/>
            <person name="Salzberg S.L."/>
            <person name="Craig A."/>
            <person name="Kyes S."/>
            <person name="Chan M.-S."/>
            <person name="Nene V."/>
            <person name="Shallom S.J."/>
            <person name="Suh B."/>
            <person name="Peterson J."/>
            <person name="Angiuoli S."/>
            <person name="Pertea M."/>
            <person name="Allen J."/>
            <person name="Selengut J."/>
            <person name="Haft D."/>
            <person name="Mather M.W."/>
            <person name="Vaidya A.B."/>
            <person name="Martin D.M.A."/>
            <person name="Fairlamb A.H."/>
            <person name="Fraunholz M.J."/>
            <person name="Roos D.S."/>
            <person name="Ralph S.A."/>
            <person name="McFadden G.I."/>
            <person name="Cummings L.M."/>
            <person name="Subramanian G.M."/>
            <person name="Mungall C."/>
            <person name="Venter J.C."/>
            <person name="Carucci D.J."/>
            <person name="Hoffman S.L."/>
            <person name="Newbold C."/>
            <person name="Davis R.W."/>
            <person name="Fraser C.M."/>
            <person name="Barrell B.G."/>
        </authorList>
    </citation>
    <scope>NUCLEOTIDE SEQUENCE [LARGE SCALE GENOMIC DNA]</scope>
    <source>
        <strain evidence="19">3D7</strain>
    </source>
</reference>
<reference key="3">
    <citation type="journal article" date="1995" name="Infect. Immun.">
        <title>Functional expression of falcipain, a Plasmodium falciparum cysteine proteinase, supports its role as a malarial hemoglobinase.</title>
        <authorList>
            <person name="Salas F."/>
            <person name="Fichmann J."/>
            <person name="Lee G.K."/>
            <person name="Scott M.D."/>
            <person name="Rosenthal P.J."/>
        </authorList>
    </citation>
    <scope>FUNCTION</scope>
    <scope>CATALYTIC ACTIVITY</scope>
    <scope>BIOPHYSICOCHEMICAL PROPERTIES</scope>
</reference>
<reference key="4">
    <citation type="journal article" date="2002" name="Science">
        <title>A role for the protease falcipain 1 in host cell invasion by the human malaria parasite.</title>
        <authorList>
            <person name="Greenbaum D.C."/>
            <person name="Baruch A."/>
            <person name="Grainger M."/>
            <person name="Bozdech Z."/>
            <person name="Medzihradszky K.F."/>
            <person name="Engel J."/>
            <person name="DeRisi J."/>
            <person name="Holder A.A."/>
            <person name="Bogyo M."/>
        </authorList>
    </citation>
    <scope>FUNCTION</scope>
    <scope>CATALYTIC ACTIVITY</scope>
    <scope>SUBCELLULAR LOCATION</scope>
    <scope>DEVELOPMENTAL STAGE</scope>
    <scope>IDENTIFICATION BY MASS SPECTROMETRY</scope>
</reference>
<reference key="5">
    <citation type="journal article" date="2004" name="Mol. Microbiol.">
        <title>Targeted disruption of Plasmodium falciparum cysteine protease, falcipain 1, reduces oocyst production, not erythrocytic stage growth.</title>
        <authorList>
            <person name="Eksi S."/>
            <person name="Czesny B."/>
            <person name="Greenbaum D.C."/>
            <person name="Bogyo M."/>
            <person name="Williamson K.C."/>
        </authorList>
    </citation>
    <scope>FUNCTION</scope>
    <scope>DEVELOPMENTAL STAGE</scope>
    <scope>DISRUPTION PHENOTYPE</scope>
</reference>
<reference key="6">
    <citation type="journal article" date="2004" name="Proc. Natl. Acad. Sci. U.S.A.">
        <title>Plasmodium falciparum cysteine protease falcipain-1 is not essential in erythrocytic stage malaria parasites.</title>
        <authorList>
            <person name="Sijwali P.S."/>
            <person name="Kato K."/>
            <person name="Seydel K.B."/>
            <person name="Gut J."/>
            <person name="Lehman J."/>
            <person name="Klemba M."/>
            <person name="Goldberg D.E."/>
            <person name="Miller L.H."/>
            <person name="Rosenthal P.J."/>
        </authorList>
    </citation>
    <scope>DEVELOPMENTAL STAGE</scope>
    <scope>DISRUPTION PHENOTYPE</scope>
</reference>
<reference key="7">
    <citation type="journal article" date="2007" name="Infect. Immun.">
        <title>Falcipain-1, a Plasmodium falciparum cysteine protease with vaccine potential.</title>
        <authorList>
            <person name="Kumar A."/>
            <person name="Kumar K."/>
            <person name="Korde R."/>
            <person name="Puri S.K."/>
            <person name="Malhotra P."/>
            <person name="Singh Chauhan V."/>
        </authorList>
    </citation>
    <scope>FUNCTION</scope>
    <scope>CATALYTIC ACTIVITY</scope>
    <scope>SUBCELLULAR LOCATION</scope>
    <scope>DEVELOPMENTAL STAGE</scope>
    <scope>DISULFIDE BOND</scope>
</reference>
<gene>
    <name evidence="16" type="primary">FP1</name>
    <name evidence="18" type="ORF">PF3D7_1458000</name>
</gene>
<name>FPC1_PLAF7</name>
<dbReference type="EC" id="3.4.22.-" evidence="8 12 13"/>
<dbReference type="EMBL" id="M81341">
    <property type="protein sequence ID" value="AAA29578.1"/>
    <property type="molecule type" value="Genomic_DNA"/>
</dbReference>
<dbReference type="EMBL" id="LN999946">
    <property type="protein sequence ID" value="CZU00276.1"/>
    <property type="molecule type" value="Genomic_DNA"/>
</dbReference>
<dbReference type="PIR" id="A45624">
    <property type="entry name" value="A45624"/>
</dbReference>
<dbReference type="RefSeq" id="XP_001348727.1">
    <property type="nucleotide sequence ID" value="XM_001348691.1"/>
</dbReference>
<dbReference type="SMR" id="P25805"/>
<dbReference type="STRING" id="36329.P25805"/>
<dbReference type="BindingDB" id="P25805"/>
<dbReference type="ChEMBL" id="CHEMBL1250371"/>
<dbReference type="MEROPS" id="C01.077"/>
<dbReference type="PaxDb" id="5833-PF14_0553"/>
<dbReference type="EnsemblProtists" id="CZU00276">
    <property type="protein sequence ID" value="CZU00276"/>
    <property type="gene ID" value="PF3D7_1458000"/>
</dbReference>
<dbReference type="GeneID" id="812135"/>
<dbReference type="KEGG" id="pfa:PF3D7_1458000"/>
<dbReference type="VEuPathDB" id="PlasmoDB:PF3D7_1458000"/>
<dbReference type="VEuPathDB" id="PlasmoDB:Pf7G8-2_000531800"/>
<dbReference type="VEuPathDB" id="PlasmoDB:Pf7G8_140063200"/>
<dbReference type="VEuPathDB" id="PlasmoDB:PfCD01_140063300"/>
<dbReference type="VEuPathDB" id="PlasmoDB:PfDd2_140062400"/>
<dbReference type="VEuPathDB" id="PlasmoDB:PfGA01_140063400"/>
<dbReference type="VEuPathDB" id="PlasmoDB:PfGB4_140064100"/>
<dbReference type="VEuPathDB" id="PlasmoDB:PfGN01_140063300"/>
<dbReference type="VEuPathDB" id="PlasmoDB:PfHB3_140063700"/>
<dbReference type="VEuPathDB" id="PlasmoDB:PfIT_140064400"/>
<dbReference type="VEuPathDB" id="PlasmoDB:PfKE01_140062800"/>
<dbReference type="VEuPathDB" id="PlasmoDB:PfKH01_140063500"/>
<dbReference type="VEuPathDB" id="PlasmoDB:PfKH02_140063700"/>
<dbReference type="VEuPathDB" id="PlasmoDB:PfML01_140063600"/>
<dbReference type="VEuPathDB" id="PlasmoDB:PfNF135_140062100"/>
<dbReference type="VEuPathDB" id="PlasmoDB:PfNF166_140060900"/>
<dbReference type="VEuPathDB" id="PlasmoDB:PfNF54_140061700"/>
<dbReference type="VEuPathDB" id="PlasmoDB:PfSD01_140061300"/>
<dbReference type="VEuPathDB" id="PlasmoDB:PfSN01_140065200"/>
<dbReference type="VEuPathDB" id="PlasmoDB:PfTG01_140063300"/>
<dbReference type="HOGENOM" id="CLU_472144_0_0_1"/>
<dbReference type="InParanoid" id="Q8I6V0"/>
<dbReference type="OMA" id="FCLSYRC"/>
<dbReference type="OrthoDB" id="190265at2759"/>
<dbReference type="Reactome" id="R-PFA-2132295">
    <property type="pathway name" value="MHC class II antigen presentation"/>
</dbReference>
<dbReference type="Reactome" id="R-PFA-6798695">
    <property type="pathway name" value="Neutrophil degranulation"/>
</dbReference>
<dbReference type="Proteomes" id="UP000001450">
    <property type="component" value="Chromosome 14"/>
</dbReference>
<dbReference type="GO" id="GO:0016020">
    <property type="term" value="C:membrane"/>
    <property type="evidence" value="ECO:0007669"/>
    <property type="project" value="UniProtKB-SubCell"/>
</dbReference>
<dbReference type="GO" id="GO:0020026">
    <property type="term" value="C:merozoite dense granule"/>
    <property type="evidence" value="ECO:0000314"/>
    <property type="project" value="UniProtKB"/>
</dbReference>
<dbReference type="GO" id="GO:0004197">
    <property type="term" value="F:cysteine-type endopeptidase activity"/>
    <property type="evidence" value="ECO:0000314"/>
    <property type="project" value="UniProtKB"/>
</dbReference>
<dbReference type="GO" id="GO:0044129">
    <property type="term" value="P:positive regulation of development of symbiont in host"/>
    <property type="evidence" value="ECO:0000314"/>
    <property type="project" value="UniProtKB"/>
</dbReference>
<dbReference type="GO" id="GO:0006508">
    <property type="term" value="P:proteolysis"/>
    <property type="evidence" value="ECO:0000314"/>
    <property type="project" value="UniProtKB"/>
</dbReference>
<dbReference type="CDD" id="cd02248">
    <property type="entry name" value="Peptidase_C1A"/>
    <property type="match status" value="1"/>
</dbReference>
<dbReference type="FunFam" id="3.90.70.10:FF:000160">
    <property type="entry name" value="Trophozoite cysteine proteinase"/>
    <property type="match status" value="1"/>
</dbReference>
<dbReference type="Gene3D" id="3.90.70.10">
    <property type="entry name" value="Cysteine proteinases"/>
    <property type="match status" value="1"/>
</dbReference>
<dbReference type="InterPro" id="IPR038765">
    <property type="entry name" value="Papain-like_cys_pep_sf"/>
</dbReference>
<dbReference type="InterPro" id="IPR025661">
    <property type="entry name" value="Pept_asp_AS"/>
</dbReference>
<dbReference type="InterPro" id="IPR000169">
    <property type="entry name" value="Pept_cys_AS"/>
</dbReference>
<dbReference type="InterPro" id="IPR025660">
    <property type="entry name" value="Pept_his_AS"/>
</dbReference>
<dbReference type="InterPro" id="IPR013128">
    <property type="entry name" value="Peptidase_C1A"/>
</dbReference>
<dbReference type="InterPro" id="IPR000668">
    <property type="entry name" value="Peptidase_C1A_C"/>
</dbReference>
<dbReference type="InterPro" id="IPR039417">
    <property type="entry name" value="Peptidase_C1A_papain-like"/>
</dbReference>
<dbReference type="InterPro" id="IPR013201">
    <property type="entry name" value="Prot_inhib_I29"/>
</dbReference>
<dbReference type="PANTHER" id="PTHR12411">
    <property type="entry name" value="CYSTEINE PROTEASE FAMILY C1-RELATED"/>
    <property type="match status" value="1"/>
</dbReference>
<dbReference type="Pfam" id="PF08246">
    <property type="entry name" value="Inhibitor_I29"/>
    <property type="match status" value="1"/>
</dbReference>
<dbReference type="Pfam" id="PF00112">
    <property type="entry name" value="Peptidase_C1"/>
    <property type="match status" value="1"/>
</dbReference>
<dbReference type="PRINTS" id="PR00705">
    <property type="entry name" value="PAPAIN"/>
</dbReference>
<dbReference type="SMART" id="SM00848">
    <property type="entry name" value="Inhibitor_I29"/>
    <property type="match status" value="1"/>
</dbReference>
<dbReference type="SMART" id="SM00645">
    <property type="entry name" value="Pept_C1"/>
    <property type="match status" value="1"/>
</dbReference>
<dbReference type="SUPFAM" id="SSF54001">
    <property type="entry name" value="Cysteine proteinases"/>
    <property type="match status" value="1"/>
</dbReference>
<dbReference type="PROSITE" id="PS00640">
    <property type="entry name" value="THIOL_PROTEASE_ASN"/>
    <property type="match status" value="1"/>
</dbReference>
<dbReference type="PROSITE" id="PS00139">
    <property type="entry name" value="THIOL_PROTEASE_CYS"/>
    <property type="match status" value="1"/>
</dbReference>
<dbReference type="PROSITE" id="PS00639">
    <property type="entry name" value="THIOL_PROTEASE_HIS"/>
    <property type="match status" value="1"/>
</dbReference>
<organism evidence="19">
    <name type="scientific">Plasmodium falciparum (isolate 3D7)</name>
    <dbReference type="NCBI Taxonomy" id="36329"/>
    <lineage>
        <taxon>Eukaryota</taxon>
        <taxon>Sar</taxon>
        <taxon>Alveolata</taxon>
        <taxon>Apicomplexa</taxon>
        <taxon>Aconoidasida</taxon>
        <taxon>Haemosporida</taxon>
        <taxon>Plasmodiidae</taxon>
        <taxon>Plasmodium</taxon>
        <taxon>Plasmodium (Laverania)</taxon>
    </lineage>
</organism>
<comment type="function">
    <text evidence="8 10 12 13">Cysteine protease (PubMed:12471262, PubMed:17242063, PubMed:7768590). In the mosquito midgut, required for parasite development (PubMed:15225318).</text>
</comment>
<comment type="biophysicochemical properties">
    <phDependence>
        <text evidence="13">Optimum pH is 6.</text>
    </phDependence>
</comment>
<comment type="subcellular location">
    <subcellularLocation>
        <location evidence="2">Membrane</location>
        <topology evidence="16">Single-pass type II membrane protein</topology>
    </subcellularLocation>
    <subcellularLocation>
        <location evidence="8">Cytoplasmic granule</location>
    </subcellularLocation>
    <text evidence="8 12">Localizes to punctate structures, likely dense granules, at the apical end of merozoites.</text>
</comment>
<comment type="developmental stage">
    <text evidence="8 9 10 11 12">Expressed during the asexual blood stage, expression is very low in rings, increases in early trophozoites and remains high in late trophozoites and schizonts (at protein level) (PubMed:12471262, PubMed:15166288, PubMed:1565129, PubMed:17242063). Expressed in merozoites (at protein level) (PubMed:12471262, PubMed:17242063). Expressed during gametogenesis (stages I to V) (at protein level) (PubMed:15225318).</text>
</comment>
<comment type="PTM">
    <text evidence="12">Contains disulfide bonds.</text>
</comment>
<comment type="disruption phenotype">
    <text evidence="9 10">Normal growth during the asexual blood stage (PubMed:15166288, PubMed:15225318). Normal invasion of host erythrocytes (PubMed:15166288). Normal gametocytogenesis (PubMed:15225318). Severe reduction in the number of oocysts in the midgut following mosquito infection with gametocytes (PubMed:15225318).</text>
</comment>
<comment type="miscellaneous">
    <text evidence="13">Able to cleave native host hemoglobin; however, hemoglobin is likely not to be the physiological substrate.</text>
</comment>
<comment type="similarity">
    <text evidence="4">Belongs to the peptidase C1 family.</text>
</comment>
<comment type="caution">
    <text evidence="8 9 10">One study shows that FP1 is involved in merozoite invasion of host erythrocytes (PubMed:12471262). However, two other studies show using an FP1 knockout that this is not the case and the data are due to an off-target effect of the inhibitor YA29 in the initial study (PubMed:15166288, PubMed:15225318).</text>
</comment>
<accession>P25805</accession>
<accession>Q8I6V0</accession>
<sequence>MVAIKEMKEFAFARPSLVETLNKKKKFLKKKEKRTFVLSIYAFITFIIFCIGILYFTNKSSAHNNNNNKNEHSLKKEEIELLRVLLEKYKKQKDGILNESSNEEDEEKYTLNSETYNNKNNVSNIKNDSIKSKKEEYINLERILLEKYKKFINENNEENRKELSNILHKLLEINKLILREEKDDKKVYLINDNYDEKGALEIGMNEEMKYKKEDPINNIKYASKFFKFMKEHNKVYKNIDEQMRKFEIFKINYISIKNHNKLNKNAMYKKKVNQFSDYSEEELKEYFKTLLHVPNHMIEKYSKPFENHLKDNILISEFYTNGKRNEKDIFSKVPEILDYREKGIVHEPKDQGLCGSCWAFASVGNIESVFAKKNKNILSFSEQEVVDCSKDNFGCDGGHPFYSFLYVLQNELCLGDEYKYKAKDDMFCLNYRCKRKVSLSSIGAVKENQLILALNEVGPLSVNVGVNNDFVAYSEGVYNGTCSEELNHSVLLVGYGQVEKTKLNYNNKIQTYNTKENSNQPDDNIIYYWIIKNSWSKKWGENGFMRLSRNKNGDNVFCGIGEEVFYPIL</sequence>
<protein>
    <recommendedName>
        <fullName evidence="15">Falcipain-1</fullName>
        <ecNumber evidence="8 12 13">3.4.22.-</ecNumber>
    </recommendedName>
    <alternativeName>
        <fullName evidence="15">Cysteine proteinase falcipain-1</fullName>
    </alternativeName>
    <alternativeName>
        <fullName evidence="14">Trophozoite cysteine proteinase</fullName>
        <shortName evidence="14">TCP</shortName>
    </alternativeName>
</protein>
<evidence type="ECO:0000250" key="1">
    <source>
        <dbReference type="UniProtKB" id="Q8I6U4"/>
    </source>
</evidence>
<evidence type="ECO:0000255" key="2"/>
<evidence type="ECO:0000255" key="3">
    <source>
        <dbReference type="PROSITE-ProRule" id="PRU00498"/>
    </source>
</evidence>
<evidence type="ECO:0000255" key="4">
    <source>
        <dbReference type="PROSITE-ProRule" id="PRU10088"/>
    </source>
</evidence>
<evidence type="ECO:0000255" key="5">
    <source>
        <dbReference type="PROSITE-ProRule" id="PRU10089"/>
    </source>
</evidence>
<evidence type="ECO:0000255" key="6">
    <source>
        <dbReference type="PROSITE-ProRule" id="PRU10090"/>
    </source>
</evidence>
<evidence type="ECO:0000256" key="7">
    <source>
        <dbReference type="SAM" id="MobiDB-lite"/>
    </source>
</evidence>
<evidence type="ECO:0000269" key="8">
    <source>
    </source>
</evidence>
<evidence type="ECO:0000269" key="9">
    <source>
    </source>
</evidence>
<evidence type="ECO:0000269" key="10">
    <source>
    </source>
</evidence>
<evidence type="ECO:0000269" key="11">
    <source>
    </source>
</evidence>
<evidence type="ECO:0000269" key="12">
    <source>
    </source>
</evidence>
<evidence type="ECO:0000269" key="13">
    <source>
    </source>
</evidence>
<evidence type="ECO:0000303" key="14">
    <source>
    </source>
</evidence>
<evidence type="ECO:0000303" key="15">
    <source>
    </source>
</evidence>
<evidence type="ECO:0000305" key="16"/>
<evidence type="ECO:0000312" key="17">
    <source>
        <dbReference type="EMBL" id="AAA29578.1"/>
    </source>
</evidence>
<evidence type="ECO:0000312" key="18">
    <source>
        <dbReference type="EMBL" id="CZU00276.1"/>
    </source>
</evidence>
<evidence type="ECO:0000312" key="19">
    <source>
        <dbReference type="Proteomes" id="UP000001450"/>
    </source>
</evidence>
<proteinExistence type="evidence at protein level"/>
<feature type="propeptide" id="PRO_0000026473" description="Activation peptide" evidence="2">
    <location>
        <begin position="1"/>
        <end position="332"/>
    </location>
</feature>
<feature type="chain" id="PRO_0000026474" description="Falcipain-1">
    <location>
        <begin position="333"/>
        <end position="569"/>
    </location>
</feature>
<feature type="topological domain" description="Cytoplasmic" evidence="16">
    <location>
        <begin position="1"/>
        <end position="35"/>
    </location>
</feature>
<feature type="transmembrane region" description="Helical; Signal-anchor for type II membrane protein" evidence="2">
    <location>
        <begin position="36"/>
        <end position="56"/>
    </location>
</feature>
<feature type="topological domain" description="Lumenal" evidence="16">
    <location>
        <begin position="57"/>
        <end position="569"/>
    </location>
</feature>
<feature type="region of interest" description="Disordered" evidence="7">
    <location>
        <begin position="97"/>
        <end position="118"/>
    </location>
</feature>
<feature type="active site" evidence="4">
    <location>
        <position position="357"/>
    </location>
</feature>
<feature type="active site" evidence="5">
    <location>
        <position position="488"/>
    </location>
</feature>
<feature type="active site" evidence="6">
    <location>
        <position position="533"/>
    </location>
</feature>
<feature type="glycosylation site" description="N-linked (GlcNAc...) asparagine" evidence="3">
    <location>
        <position position="58"/>
    </location>
</feature>
<feature type="glycosylation site" description="N-linked (GlcNAc...) asparagine" evidence="3">
    <location>
        <position position="98"/>
    </location>
</feature>
<feature type="glycosylation site" description="N-linked (GlcNAc...) asparagine" evidence="3">
    <location>
        <position position="121"/>
    </location>
</feature>
<feature type="glycosylation site" description="N-linked (GlcNAc...) asparagine" evidence="3">
    <location>
        <position position="127"/>
    </location>
</feature>
<feature type="glycosylation site" description="N-linked (GlcNAc...) asparagine" evidence="3">
    <location>
        <position position="479"/>
    </location>
</feature>
<feature type="glycosylation site" description="N-linked (GlcNAc...) asparagine" evidence="3">
    <location>
        <position position="487"/>
    </location>
</feature>
<feature type="disulfide bond" evidence="1">
    <location>
        <begin position="354"/>
        <end position="395"/>
    </location>
</feature>
<feature type="disulfide bond" evidence="1">
    <location>
        <begin position="388"/>
        <end position="428"/>
    </location>
</feature>
<feature type="disulfide bond" evidence="1">
    <location>
        <begin position="413"/>
        <end position="433"/>
    </location>
</feature>
<feature type="disulfide bond" evidence="1">
    <location>
        <begin position="482"/>
        <end position="558"/>
    </location>
</feature>
<feature type="sequence conflict" description="In Ref. 1; AAA29578." evidence="16" ref="1">
    <original>F</original>
    <variation>L</variation>
    <location>
        <position position="10"/>
    </location>
</feature>
<keyword id="KW-1015">Disulfide bond</keyword>
<keyword id="KW-0325">Glycoprotein</keyword>
<keyword id="KW-0378">Hydrolase</keyword>
<keyword id="KW-0472">Membrane</keyword>
<keyword id="KW-0645">Protease</keyword>
<keyword id="KW-1185">Reference proteome</keyword>
<keyword id="KW-0735">Signal-anchor</keyword>
<keyword id="KW-0788">Thiol protease</keyword>
<keyword id="KW-0812">Transmembrane</keyword>
<keyword id="KW-1133">Transmembrane helix</keyword>
<keyword id="KW-0865">Zymogen</keyword>